<name>WRKY4_ARATH</name>
<keyword id="KW-0002">3D-structure</keyword>
<keyword id="KW-0025">Alternative splicing</keyword>
<keyword id="KW-0238">DNA-binding</keyword>
<keyword id="KW-0479">Metal-binding</keyword>
<keyword id="KW-0539">Nucleus</keyword>
<keyword id="KW-0611">Plant defense</keyword>
<keyword id="KW-1185">Reference proteome</keyword>
<keyword id="KW-0677">Repeat</keyword>
<keyword id="KW-0804">Transcription</keyword>
<keyword id="KW-0805">Transcription regulation</keyword>
<keyword id="KW-0862">Zinc</keyword>
<gene>
    <name type="primary">WRKY4</name>
    <name type="ordered locus">At1g13960</name>
    <name type="ORF">F16A14.18</name>
    <name type="ORF">F7A19.5</name>
</gene>
<sequence length="514" mass="55816">MSEKEEAPSTSKSTGAPSRPTLSLPPRPFSEMFFNGGVGFSPGPMTLVSNMFPDSDEFRSFSQLLAGAMSSPATAAAAAAAATASDYQRLGEGTNSSSGDVDPRFKQNRPTGLMISQSQSPSMFTVPPGLSPAMLLDSPSFLGLFSPVQGSYGMTHQQALAQVTAQAVQANANMQPQTEYPPPSQVQSFSSGQAQIPTSAPLPAQRETSDVTIIEHRSQQPLNVDKPADDGYNWRKYGQKQVKGSEFPRSYYKCTNPGCPVKKKVERSLDGQVTEIIYKGQHNHEPPQNTKRGNKDNTANINGSSINNNRGSSELGASQFQTNSSNKTKREQHEAVSQATTTEHLSEASDGEEVGNGETDVREKDENEPDPKRRSTEVRISEPAPAASHRTVTEPRIIVQTTSEVDLLDDGYRWRKYGQKVVKGNPYPRSYYKCTTPGCGVRKHVERAATDPKAVVTTYEGKHNHDLPAAKSSSHAAAAAQLRPDNRPGGLANLNQQQQQQPVARLRLKEEQTT</sequence>
<comment type="function">
    <text evidence="6 7">Transcription factor that binds specifically to the W box (5'-(T)TGAC[CT]-3'), a frequently occurring elicitor-responsive cis-acting element. Has a positive role in resistance to necrotrophic pathogens (e.g. Botrytis cinerea), but a negative effect on plant resistance to biotrophic pathogens (e.g. Pseudomonas syringae).</text>
</comment>
<comment type="subcellular location">
    <subcellularLocation>
        <location evidence="1 6">Nucleus</location>
    </subcellularLocation>
</comment>
<comment type="alternative products">
    <event type="alternative splicing"/>
    <isoform>
        <id>Q9XI90-1</id>
        <name>1</name>
        <sequence type="displayed"/>
    </isoform>
    <isoform>
        <id>Q9XI90-2</id>
        <name>2</name>
        <sequence type="described" ref="VSP_008969"/>
    </isoform>
</comment>
<comment type="tissue specificity">
    <text evidence="4">In young, mature and senescent leaves.</text>
</comment>
<comment type="induction">
    <text evidence="3 4 6">By biotic and abiotic stresses such as pathogen infection (e.g. Botrytis cinerea and Pseudomonas syringae), salicylic acid (SA), jasmonic acid (JA), ethylene (ACC), liquid infiltration or spraying, and strongly during leaf senescence.</text>
</comment>
<comment type="disruption phenotype">
    <text evidence="6">Increased sensitivity to the necrotrophic fungal pathogen Botrytis cinerea.</text>
</comment>
<comment type="sequence caution" evidence="9">
    <conflict type="erroneous gene model prediction">
        <sequence resource="EMBL-CDS" id="AAD39282"/>
    </conflict>
</comment>
<comment type="sequence caution" evidence="9">
    <conflict type="erroneous gene model prediction">
        <sequence resource="EMBL-CDS" id="AAF79402"/>
    </conflict>
</comment>
<dbReference type="EMBL" id="AF224703">
    <property type="protein sequence ID" value="AAK28313.1"/>
    <property type="molecule type" value="mRNA"/>
</dbReference>
<dbReference type="EMBL" id="AF425835">
    <property type="protein sequence ID" value="AAL13048.1"/>
    <property type="molecule type" value="mRNA"/>
</dbReference>
<dbReference type="EMBL" id="AC007576">
    <property type="protein sequence ID" value="AAD39282.1"/>
    <property type="status" value="ALT_SEQ"/>
    <property type="molecule type" value="Genomic_DNA"/>
</dbReference>
<dbReference type="EMBL" id="AC068197">
    <property type="protein sequence ID" value="AAF79402.1"/>
    <property type="status" value="ALT_SEQ"/>
    <property type="molecule type" value="Genomic_DNA"/>
</dbReference>
<dbReference type="EMBL" id="CP002684">
    <property type="protein sequence ID" value="AEE29089.1"/>
    <property type="molecule type" value="Genomic_DNA"/>
</dbReference>
<dbReference type="EMBL" id="AY045676">
    <property type="protein sequence ID" value="AAK74034.1"/>
    <property type="molecule type" value="mRNA"/>
</dbReference>
<dbReference type="EMBL" id="BT002629">
    <property type="protein sequence ID" value="AAO11545.1"/>
    <property type="molecule type" value="mRNA"/>
</dbReference>
<dbReference type="PIR" id="G86272">
    <property type="entry name" value="G86272"/>
</dbReference>
<dbReference type="RefSeq" id="NP_172849.1">
    <molecule id="Q9XI90-1"/>
    <property type="nucleotide sequence ID" value="NM_101262.3"/>
</dbReference>
<dbReference type="PDB" id="1WJ2">
    <property type="method" value="NMR"/>
    <property type="chains" value="A=399-469"/>
</dbReference>
<dbReference type="PDB" id="2LEX">
    <property type="method" value="NMR"/>
    <property type="chains" value="A=399-469"/>
</dbReference>
<dbReference type="PDBsum" id="1WJ2"/>
<dbReference type="PDBsum" id="2LEX"/>
<dbReference type="SMR" id="Q9XI90"/>
<dbReference type="BioGRID" id="23196">
    <property type="interactions" value="1"/>
</dbReference>
<dbReference type="FunCoup" id="Q9XI90">
    <property type="interactions" value="1064"/>
</dbReference>
<dbReference type="STRING" id="3702.Q9XI90"/>
<dbReference type="iPTMnet" id="Q9XI90"/>
<dbReference type="PaxDb" id="3702-AT1G13960.1"/>
<dbReference type="ProteomicsDB" id="234293">
    <molecule id="Q9XI90-1"/>
</dbReference>
<dbReference type="EnsemblPlants" id="AT1G13960.1">
    <molecule id="Q9XI90-1"/>
    <property type="protein sequence ID" value="AT1G13960.1"/>
    <property type="gene ID" value="AT1G13960"/>
</dbReference>
<dbReference type="GeneID" id="837956"/>
<dbReference type="Gramene" id="AT1G13960.1">
    <molecule id="Q9XI90-1"/>
    <property type="protein sequence ID" value="AT1G13960.1"/>
    <property type="gene ID" value="AT1G13960"/>
</dbReference>
<dbReference type="KEGG" id="ath:AT1G13960"/>
<dbReference type="Araport" id="AT1G13960"/>
<dbReference type="TAIR" id="AT1G13960">
    <property type="gene designation" value="WRKY4"/>
</dbReference>
<dbReference type="eggNOG" id="ENOG502QTWW">
    <property type="taxonomic scope" value="Eukaryota"/>
</dbReference>
<dbReference type="HOGENOM" id="CLU_012086_7_0_1"/>
<dbReference type="InParanoid" id="Q9XI90"/>
<dbReference type="OMA" id="MFPDSDE"/>
<dbReference type="PhylomeDB" id="Q9XI90"/>
<dbReference type="EvolutionaryTrace" id="Q9XI90"/>
<dbReference type="PRO" id="PR:Q9XI90"/>
<dbReference type="Proteomes" id="UP000006548">
    <property type="component" value="Chromosome 1"/>
</dbReference>
<dbReference type="ExpressionAtlas" id="Q9XI90">
    <property type="expression patterns" value="baseline and differential"/>
</dbReference>
<dbReference type="GO" id="GO:0005634">
    <property type="term" value="C:nucleus"/>
    <property type="evidence" value="ECO:0000314"/>
    <property type="project" value="UniProtKB"/>
</dbReference>
<dbReference type="GO" id="GO:0003677">
    <property type="term" value="F:DNA binding"/>
    <property type="evidence" value="ECO:0000250"/>
    <property type="project" value="TAIR"/>
</dbReference>
<dbReference type="GO" id="GO:0003700">
    <property type="term" value="F:DNA-binding transcription factor activity"/>
    <property type="evidence" value="ECO:0000250"/>
    <property type="project" value="TAIR"/>
</dbReference>
<dbReference type="GO" id="GO:0046872">
    <property type="term" value="F:metal ion binding"/>
    <property type="evidence" value="ECO:0007669"/>
    <property type="project" value="UniProtKB-KW"/>
</dbReference>
<dbReference type="GO" id="GO:0043565">
    <property type="term" value="F:sequence-specific DNA binding"/>
    <property type="evidence" value="ECO:0000314"/>
    <property type="project" value="UniProtKB"/>
</dbReference>
<dbReference type="GO" id="GO:0000976">
    <property type="term" value="F:transcription cis-regulatory region binding"/>
    <property type="evidence" value="ECO:0000314"/>
    <property type="project" value="UniProtKB"/>
</dbReference>
<dbReference type="GO" id="GO:0006952">
    <property type="term" value="P:defense response"/>
    <property type="evidence" value="ECO:0007669"/>
    <property type="project" value="UniProtKB-KW"/>
</dbReference>
<dbReference type="GO" id="GO:1900425">
    <property type="term" value="P:negative regulation of defense response to bacterium"/>
    <property type="evidence" value="ECO:0000315"/>
    <property type="project" value="UniProtKB"/>
</dbReference>
<dbReference type="GO" id="GO:1900150">
    <property type="term" value="P:regulation of defense response to fungus"/>
    <property type="evidence" value="ECO:0000315"/>
    <property type="project" value="UniProtKB"/>
</dbReference>
<dbReference type="GO" id="GO:0009723">
    <property type="term" value="P:response to ethylene"/>
    <property type="evidence" value="ECO:0000314"/>
    <property type="project" value="UniProtKB"/>
</dbReference>
<dbReference type="GO" id="GO:0009753">
    <property type="term" value="P:response to jasmonic acid"/>
    <property type="evidence" value="ECO:0000314"/>
    <property type="project" value="UniProtKB"/>
</dbReference>
<dbReference type="GO" id="GO:0009751">
    <property type="term" value="P:response to salicylic acid"/>
    <property type="evidence" value="ECO:0000314"/>
    <property type="project" value="UniProtKB"/>
</dbReference>
<dbReference type="FunFam" id="2.20.25.80:FF:000006">
    <property type="entry name" value="WRKY transcription factor"/>
    <property type="match status" value="1"/>
</dbReference>
<dbReference type="FunFam" id="2.20.25.80:FF:000001">
    <property type="entry name" value="WRKY transcription factor 33"/>
    <property type="match status" value="1"/>
</dbReference>
<dbReference type="Gene3D" id="2.20.25.80">
    <property type="entry name" value="WRKY domain"/>
    <property type="match status" value="2"/>
</dbReference>
<dbReference type="InterPro" id="IPR003657">
    <property type="entry name" value="WRKY_dom"/>
</dbReference>
<dbReference type="InterPro" id="IPR036576">
    <property type="entry name" value="WRKY_dom_sf"/>
</dbReference>
<dbReference type="InterPro" id="IPR044810">
    <property type="entry name" value="WRKY_plant"/>
</dbReference>
<dbReference type="PANTHER" id="PTHR31221:SF130">
    <property type="entry name" value="WRKY TRANSCRIPTION FACTOR 3-RELATED"/>
    <property type="match status" value="1"/>
</dbReference>
<dbReference type="PANTHER" id="PTHR31221">
    <property type="entry name" value="WRKY TRANSCRIPTION FACTOR PROTEIN 1-RELATED"/>
    <property type="match status" value="1"/>
</dbReference>
<dbReference type="Pfam" id="PF03106">
    <property type="entry name" value="WRKY"/>
    <property type="match status" value="2"/>
</dbReference>
<dbReference type="SMART" id="SM00774">
    <property type="entry name" value="WRKY"/>
    <property type="match status" value="2"/>
</dbReference>
<dbReference type="SUPFAM" id="SSF118290">
    <property type="entry name" value="WRKY DNA-binding domain"/>
    <property type="match status" value="2"/>
</dbReference>
<dbReference type="PROSITE" id="PS50811">
    <property type="entry name" value="WRKY"/>
    <property type="match status" value="2"/>
</dbReference>
<feature type="chain" id="PRO_0000133647" description="Probable WRKY transcription factor 4">
    <location>
        <begin position="1"/>
        <end position="514"/>
    </location>
</feature>
<feature type="DNA-binding region" description="WRKY 1" evidence="1">
    <location>
        <begin position="223"/>
        <end position="287"/>
    </location>
</feature>
<feature type="DNA-binding region" description="WRKY 2" evidence="1">
    <location>
        <begin position="403"/>
        <end position="468"/>
    </location>
</feature>
<feature type="region of interest" description="Disordered" evidence="2">
    <location>
        <begin position="1"/>
        <end position="28"/>
    </location>
</feature>
<feature type="region of interest" description="Disordered" evidence="2">
    <location>
        <begin position="175"/>
        <end position="204"/>
    </location>
</feature>
<feature type="region of interest" description="Disordered" evidence="2">
    <location>
        <begin position="278"/>
        <end position="394"/>
    </location>
</feature>
<feature type="region of interest" description="Disordered" evidence="2">
    <location>
        <begin position="464"/>
        <end position="514"/>
    </location>
</feature>
<feature type="compositionally biased region" description="Polar residues" evidence="2">
    <location>
        <begin position="185"/>
        <end position="198"/>
    </location>
</feature>
<feature type="compositionally biased region" description="Polar residues" evidence="2">
    <location>
        <begin position="286"/>
        <end position="299"/>
    </location>
</feature>
<feature type="compositionally biased region" description="Low complexity" evidence="2">
    <location>
        <begin position="300"/>
        <end position="313"/>
    </location>
</feature>
<feature type="compositionally biased region" description="Polar residues" evidence="2">
    <location>
        <begin position="315"/>
        <end position="326"/>
    </location>
</feature>
<feature type="compositionally biased region" description="Basic and acidic residues" evidence="2">
    <location>
        <begin position="359"/>
        <end position="380"/>
    </location>
</feature>
<feature type="compositionally biased region" description="Low complexity" evidence="2">
    <location>
        <begin position="469"/>
        <end position="480"/>
    </location>
</feature>
<feature type="binding site" evidence="5 7">
    <location>
        <position position="434"/>
    </location>
    <ligand>
        <name>Zn(2+)</name>
        <dbReference type="ChEBI" id="CHEBI:29105"/>
    </ligand>
</feature>
<feature type="binding site" evidence="5 7">
    <location>
        <position position="436"/>
    </location>
    <ligand>
        <name>Zn(2+)</name>
        <dbReference type="ChEBI" id="CHEBI:29105"/>
    </ligand>
</feature>
<feature type="binding site" evidence="5 7">
    <location>
        <position position="439"/>
    </location>
    <ligand>
        <name>Zn(2+)</name>
        <dbReference type="ChEBI" id="CHEBI:29105"/>
    </ligand>
</feature>
<feature type="binding site" evidence="5 7">
    <location>
        <position position="463"/>
    </location>
    <ligand>
        <name>Zn(2+)</name>
        <dbReference type="ChEBI" id="CHEBI:29105"/>
    </ligand>
</feature>
<feature type="binding site" evidence="5 7">
    <location>
        <position position="465"/>
    </location>
    <ligand>
        <name>Zn(2+)</name>
        <dbReference type="ChEBI" id="CHEBI:29105"/>
    </ligand>
</feature>
<feature type="splice variant" id="VSP_008969" description="In isoform 2." evidence="8">
    <original>GLMISQSQSPSMFTVPPGLSPAMLLDSPSFLGLFSP</original>
    <variation>AVLDLICNI</variation>
    <location>
        <begin position="112"/>
        <end position="147"/>
    </location>
</feature>
<feature type="strand" evidence="10">
    <location>
        <begin position="410"/>
        <end position="412"/>
    </location>
</feature>
<feature type="strand" evidence="10">
    <location>
        <begin position="418"/>
        <end position="420"/>
    </location>
</feature>
<feature type="turn" evidence="11">
    <location>
        <begin position="423"/>
        <end position="426"/>
    </location>
</feature>
<feature type="strand" evidence="10">
    <location>
        <begin position="429"/>
        <end position="435"/>
    </location>
</feature>
<feature type="strand" evidence="10">
    <location>
        <begin position="440"/>
        <end position="448"/>
    </location>
</feature>
<feature type="turn" evidence="10">
    <location>
        <begin position="449"/>
        <end position="452"/>
    </location>
</feature>
<feature type="strand" evidence="10">
    <location>
        <begin position="453"/>
        <end position="461"/>
    </location>
</feature>
<accession>Q9XI90</accession>
<accession>Q93WN8</accession>
<accession>Q9LMG1</accession>
<reference key="1">
    <citation type="journal article" date="2001" name="Plant Cell">
        <title>Evidence for an important role of WRKY DNA binding proteins in the regulation of NPR1 gene expression.</title>
        <authorList>
            <person name="Yu D."/>
            <person name="Chen C."/>
            <person name="Chen Z."/>
        </authorList>
    </citation>
    <scope>NUCLEOTIDE SEQUENCE [MRNA] (ISOFORM 2)</scope>
    <scope>INDUCTION</scope>
</reference>
<reference key="2">
    <citation type="submission" date="2001-09" db="EMBL/GenBank/DDBJ databases">
        <title>Arabidopsis thaliana transcription factor WRKY4.</title>
        <authorList>
            <person name="Ulker B."/>
            <person name="Kushnir S."/>
            <person name="Somssich I.E."/>
        </authorList>
    </citation>
    <scope>NUCLEOTIDE SEQUENCE [MRNA] (ISOFORM 1)</scope>
    <source>
        <strain>cv. Columbia</strain>
        <tissue>Flower</tissue>
    </source>
</reference>
<reference key="3">
    <citation type="journal article" date="2000" name="Nature">
        <title>Sequence and analysis of chromosome 1 of the plant Arabidopsis thaliana.</title>
        <authorList>
            <person name="Theologis A."/>
            <person name="Ecker J.R."/>
            <person name="Palm C.J."/>
            <person name="Federspiel N.A."/>
            <person name="Kaul S."/>
            <person name="White O."/>
            <person name="Alonso J."/>
            <person name="Altafi H."/>
            <person name="Araujo R."/>
            <person name="Bowman C.L."/>
            <person name="Brooks S.Y."/>
            <person name="Buehler E."/>
            <person name="Chan A."/>
            <person name="Chao Q."/>
            <person name="Chen H."/>
            <person name="Cheuk R.F."/>
            <person name="Chin C.W."/>
            <person name="Chung M.K."/>
            <person name="Conn L."/>
            <person name="Conway A.B."/>
            <person name="Conway A.R."/>
            <person name="Creasy T.H."/>
            <person name="Dewar K."/>
            <person name="Dunn P."/>
            <person name="Etgu P."/>
            <person name="Feldblyum T.V."/>
            <person name="Feng J.-D."/>
            <person name="Fong B."/>
            <person name="Fujii C.Y."/>
            <person name="Gill J.E."/>
            <person name="Goldsmith A.D."/>
            <person name="Haas B."/>
            <person name="Hansen N.F."/>
            <person name="Hughes B."/>
            <person name="Huizar L."/>
            <person name="Hunter J.L."/>
            <person name="Jenkins J."/>
            <person name="Johnson-Hopson C."/>
            <person name="Khan S."/>
            <person name="Khaykin E."/>
            <person name="Kim C.J."/>
            <person name="Koo H.L."/>
            <person name="Kremenetskaia I."/>
            <person name="Kurtz D.B."/>
            <person name="Kwan A."/>
            <person name="Lam B."/>
            <person name="Langin-Hooper S."/>
            <person name="Lee A."/>
            <person name="Lee J.M."/>
            <person name="Lenz C.A."/>
            <person name="Li J.H."/>
            <person name="Li Y.-P."/>
            <person name="Lin X."/>
            <person name="Liu S.X."/>
            <person name="Liu Z.A."/>
            <person name="Luros J.S."/>
            <person name="Maiti R."/>
            <person name="Marziali A."/>
            <person name="Militscher J."/>
            <person name="Miranda M."/>
            <person name="Nguyen M."/>
            <person name="Nierman W.C."/>
            <person name="Osborne B.I."/>
            <person name="Pai G."/>
            <person name="Peterson J."/>
            <person name="Pham P.K."/>
            <person name="Rizzo M."/>
            <person name="Rooney T."/>
            <person name="Rowley D."/>
            <person name="Sakano H."/>
            <person name="Salzberg S.L."/>
            <person name="Schwartz J.R."/>
            <person name="Shinn P."/>
            <person name="Southwick A.M."/>
            <person name="Sun H."/>
            <person name="Tallon L.J."/>
            <person name="Tambunga G."/>
            <person name="Toriumi M.J."/>
            <person name="Town C.D."/>
            <person name="Utterback T."/>
            <person name="Van Aken S."/>
            <person name="Vaysberg M."/>
            <person name="Vysotskaia V.S."/>
            <person name="Walker M."/>
            <person name="Wu D."/>
            <person name="Yu G."/>
            <person name="Fraser C.M."/>
            <person name="Venter J.C."/>
            <person name="Davis R.W."/>
        </authorList>
    </citation>
    <scope>NUCLEOTIDE SEQUENCE [LARGE SCALE GENOMIC DNA]</scope>
    <source>
        <strain>cv. Columbia</strain>
    </source>
</reference>
<reference key="4">
    <citation type="journal article" date="2017" name="Plant J.">
        <title>Araport11: a complete reannotation of the Arabidopsis thaliana reference genome.</title>
        <authorList>
            <person name="Cheng C.Y."/>
            <person name="Krishnakumar V."/>
            <person name="Chan A.P."/>
            <person name="Thibaud-Nissen F."/>
            <person name="Schobel S."/>
            <person name="Town C.D."/>
        </authorList>
    </citation>
    <scope>GENOME REANNOTATION</scope>
    <source>
        <strain>cv. Columbia</strain>
    </source>
</reference>
<reference key="5">
    <citation type="journal article" date="2003" name="Science">
        <title>Empirical analysis of transcriptional activity in the Arabidopsis genome.</title>
        <authorList>
            <person name="Yamada K."/>
            <person name="Lim J."/>
            <person name="Dale J.M."/>
            <person name="Chen H."/>
            <person name="Shinn P."/>
            <person name="Palm C.J."/>
            <person name="Southwick A.M."/>
            <person name="Wu H.C."/>
            <person name="Kim C.J."/>
            <person name="Nguyen M."/>
            <person name="Pham P.K."/>
            <person name="Cheuk R.F."/>
            <person name="Karlin-Newmann G."/>
            <person name="Liu S.X."/>
            <person name="Lam B."/>
            <person name="Sakano H."/>
            <person name="Wu T."/>
            <person name="Yu G."/>
            <person name="Miranda M."/>
            <person name="Quach H.L."/>
            <person name="Tripp M."/>
            <person name="Chang C.H."/>
            <person name="Lee J.M."/>
            <person name="Toriumi M.J."/>
            <person name="Chan M.M."/>
            <person name="Tang C.C."/>
            <person name="Onodera C.S."/>
            <person name="Deng J.M."/>
            <person name="Akiyama K."/>
            <person name="Ansari Y."/>
            <person name="Arakawa T."/>
            <person name="Banh J."/>
            <person name="Banno F."/>
            <person name="Bowser L."/>
            <person name="Brooks S.Y."/>
            <person name="Carninci P."/>
            <person name="Chao Q."/>
            <person name="Choy N."/>
            <person name="Enju A."/>
            <person name="Goldsmith A.D."/>
            <person name="Gurjal M."/>
            <person name="Hansen N.F."/>
            <person name="Hayashizaki Y."/>
            <person name="Johnson-Hopson C."/>
            <person name="Hsuan V.W."/>
            <person name="Iida K."/>
            <person name="Karnes M."/>
            <person name="Khan S."/>
            <person name="Koesema E."/>
            <person name="Ishida J."/>
            <person name="Jiang P.X."/>
            <person name="Jones T."/>
            <person name="Kawai J."/>
            <person name="Kamiya A."/>
            <person name="Meyers C."/>
            <person name="Nakajima M."/>
            <person name="Narusaka M."/>
            <person name="Seki M."/>
            <person name="Sakurai T."/>
            <person name="Satou M."/>
            <person name="Tamse R."/>
            <person name="Vaysberg M."/>
            <person name="Wallender E.K."/>
            <person name="Wong C."/>
            <person name="Yamamura Y."/>
            <person name="Yuan S."/>
            <person name="Shinozaki K."/>
            <person name="Davis R.W."/>
            <person name="Theologis A."/>
            <person name="Ecker J.R."/>
        </authorList>
    </citation>
    <scope>NUCLEOTIDE SEQUENCE [LARGE SCALE MRNA] (ISOFORM 1)</scope>
    <source>
        <strain>cv. Columbia</strain>
    </source>
</reference>
<reference key="6">
    <citation type="journal article" date="2001" name="Plant J.">
        <title>A new member of the Arabidopsis WRKY transcription factor family, AtWRKY6, is associated with both senescence- and defence-related processes.</title>
        <authorList>
            <person name="Robatzek S."/>
            <person name="Somssich I.E."/>
        </authorList>
    </citation>
    <scope>TISSUE SPECIFICITY</scope>
    <scope>INDUCTION</scope>
</reference>
<reference key="7">
    <citation type="journal article" date="2008" name="BMC Plant Biol.">
        <title>Roles of Arabidopsis WRKY3 and WRKY4 transcription factors in plant responses to pathogens.</title>
        <authorList>
            <person name="Lai Z."/>
            <person name="Vinod K."/>
            <person name="Zheng Z."/>
            <person name="Fan B."/>
            <person name="Chen Z."/>
        </authorList>
    </citation>
    <scope>FUNCTION</scope>
    <scope>DISRUPTION PHENOTYPE</scope>
    <scope>SUBCELLULAR LOCATION</scope>
    <scope>INDUCTION BY BIOTIC AND ABIOTIC STRESSES</scope>
</reference>
<reference key="8">
    <citation type="journal article" date="2005" name="Plant Cell">
        <title>Solution structure of an Arabidopsis WRKY DNA binding domain.</title>
        <authorList>
            <person name="Yamasaki K."/>
            <person name="Kigawa T."/>
            <person name="Inoue M."/>
            <person name="Tateno M."/>
            <person name="Yamasaki T."/>
            <person name="Yabuki T."/>
            <person name="Aoki M."/>
            <person name="Seki E."/>
            <person name="Matsuda T."/>
            <person name="Tomo Y."/>
            <person name="Hayami N."/>
            <person name="Terada T."/>
            <person name="Shirouzu M."/>
            <person name="Tanaka A."/>
            <person name="Seki M."/>
            <person name="Shinozaki K."/>
            <person name="Yokoyama S."/>
        </authorList>
    </citation>
    <scope>STRUCTURE BY NMR OF 399-469 IN COMPLEX WITH ZINC</scope>
    <scope>DNA BINDING</scope>
</reference>
<reference key="9">
    <citation type="journal article" date="2012" name="J. Biol. Chem.">
        <title>Structural basis for sequence-specific DNA recognition by an Arabidopsis WRKY transcription factor.</title>
        <authorList>
            <person name="Yamasaki K."/>
            <person name="Kigawa T."/>
            <person name="Watanabe S."/>
            <person name="Inoue M."/>
            <person name="Yamasaki T."/>
            <person name="Seki M."/>
            <person name="Shinozaki K."/>
            <person name="Yokoyama S."/>
        </authorList>
    </citation>
    <scope>STRUCTURE BY NMR OF 399-469 IN COMPLEX WITH ZINC AND W-BOX DNA</scope>
    <scope>DNA BINDING</scope>
    <scope>FUNCTION</scope>
</reference>
<evidence type="ECO:0000255" key="1">
    <source>
        <dbReference type="PROSITE-ProRule" id="PRU00223"/>
    </source>
</evidence>
<evidence type="ECO:0000256" key="2">
    <source>
        <dbReference type="SAM" id="MobiDB-lite"/>
    </source>
</evidence>
<evidence type="ECO:0000269" key="3">
    <source>
    </source>
</evidence>
<evidence type="ECO:0000269" key="4">
    <source>
    </source>
</evidence>
<evidence type="ECO:0000269" key="5">
    <source>
    </source>
</evidence>
<evidence type="ECO:0000269" key="6">
    <source>
    </source>
</evidence>
<evidence type="ECO:0000269" key="7">
    <source>
    </source>
</evidence>
<evidence type="ECO:0000303" key="8">
    <source>
    </source>
</evidence>
<evidence type="ECO:0000305" key="9"/>
<evidence type="ECO:0007829" key="10">
    <source>
        <dbReference type="PDB" id="1WJ2"/>
    </source>
</evidence>
<evidence type="ECO:0007829" key="11">
    <source>
        <dbReference type="PDB" id="2LEX"/>
    </source>
</evidence>
<protein>
    <recommendedName>
        <fullName>Probable WRKY transcription factor 4</fullName>
    </recommendedName>
    <alternativeName>
        <fullName>WRKY DNA-binding protein 4</fullName>
    </alternativeName>
</protein>
<proteinExistence type="evidence at protein level"/>
<organism>
    <name type="scientific">Arabidopsis thaliana</name>
    <name type="common">Mouse-ear cress</name>
    <dbReference type="NCBI Taxonomy" id="3702"/>
    <lineage>
        <taxon>Eukaryota</taxon>
        <taxon>Viridiplantae</taxon>
        <taxon>Streptophyta</taxon>
        <taxon>Embryophyta</taxon>
        <taxon>Tracheophyta</taxon>
        <taxon>Spermatophyta</taxon>
        <taxon>Magnoliopsida</taxon>
        <taxon>eudicotyledons</taxon>
        <taxon>Gunneridae</taxon>
        <taxon>Pentapetalae</taxon>
        <taxon>rosids</taxon>
        <taxon>malvids</taxon>
        <taxon>Brassicales</taxon>
        <taxon>Brassicaceae</taxon>
        <taxon>Camelineae</taxon>
        <taxon>Arabidopsis</taxon>
    </lineage>
</organism>